<feature type="chain" id="PRO_0000395448" description="Transcription factor Sp8">
    <location>
        <begin position="1"/>
        <end position="437"/>
    </location>
</feature>
<feature type="zinc finger region" description="C2H2-type 1" evidence="2">
    <location>
        <begin position="297"/>
        <end position="321"/>
    </location>
</feature>
<feature type="zinc finger region" description="C2H2-type 2" evidence="2">
    <location>
        <begin position="327"/>
        <end position="351"/>
    </location>
</feature>
<feature type="zinc finger region" description="C2H2-type 3" evidence="2">
    <location>
        <begin position="357"/>
        <end position="379"/>
    </location>
</feature>
<feature type="region of interest" description="Disordered" evidence="3">
    <location>
        <begin position="1"/>
        <end position="24"/>
    </location>
</feature>
<feature type="region of interest" description="Disordered" evidence="3">
    <location>
        <begin position="232"/>
        <end position="263"/>
    </location>
</feature>
<feature type="region of interest" description="Disordered" evidence="3">
    <location>
        <begin position="373"/>
        <end position="437"/>
    </location>
</feature>
<feature type="short sequence motif" description="9aaTAD" evidence="1">
    <location>
        <begin position="154"/>
        <end position="162"/>
    </location>
</feature>
<feature type="compositionally biased region" description="Gly residues" evidence="3">
    <location>
        <begin position="383"/>
        <end position="395"/>
    </location>
</feature>
<feature type="compositionally biased region" description="Polar residues" evidence="3">
    <location>
        <begin position="424"/>
        <end position="437"/>
    </location>
</feature>
<feature type="sequence conflict" description="In Ref. 2; AAS16485." evidence="5" ref="2">
    <original>K</original>
    <variation>T</variation>
    <location>
        <position position="8"/>
    </location>
</feature>
<feature type="sequence conflict" description="In Ref. 2; AAS16485." evidence="5" ref="2">
    <original>NG</original>
    <variation>S</variation>
    <location>
        <begin position="53"/>
        <end position="54"/>
    </location>
</feature>
<reference key="1">
    <citation type="journal article" date="2004" name="Development">
        <title>Sp8 and Sp9, two closely related buttonhead-like transcription factors, regulate Fgf8 expression and limb outgrowth in vertebrate embryos.</title>
        <authorList>
            <person name="Kawakami Y."/>
            <person name="Rodriguez Esteban C."/>
            <person name="Matsui T."/>
            <person name="Rodriguez-Leon J."/>
            <person name="Kato S."/>
            <person name="Izpisua Belmonte J.C."/>
        </authorList>
    </citation>
    <scope>NUCLEOTIDE SEQUENCE [MRNA]</scope>
    <scope>FUNCTION</scope>
    <scope>DEVELOPMENTAL STAGE</scope>
</reference>
<reference key="2">
    <citation type="submission" date="2003-11" db="EMBL/GenBank/DDBJ databases">
        <title>Zebrafish Sp8 is involved in neurogenesis.</title>
        <authorList>
            <person name="Zhao C."/>
            <person name="Meng A."/>
        </authorList>
    </citation>
    <scope>NUCLEOTIDE SEQUENCE [MRNA]</scope>
</reference>
<reference key="3">
    <citation type="submission" date="2004-01" db="EMBL/GenBank/DDBJ databases">
        <authorList>
            <consortium name="NIH - Zebrafish Gene Collection (ZGC) project"/>
        </authorList>
    </citation>
    <scope>NUCLEOTIDE SEQUENCE [LARGE SCALE MRNA]</scope>
    <source>
        <tissue>Embryo</tissue>
    </source>
</reference>
<dbReference type="EMBL" id="AY591904">
    <property type="protein sequence ID" value="AAU04513.1"/>
    <property type="molecule type" value="mRNA"/>
</dbReference>
<dbReference type="EMBL" id="AY457141">
    <property type="protein sequence ID" value="AAS16485.1"/>
    <property type="molecule type" value="mRNA"/>
</dbReference>
<dbReference type="EMBL" id="BC065597">
    <property type="protein sequence ID" value="AAH65597.1"/>
    <property type="molecule type" value="mRNA"/>
</dbReference>
<dbReference type="RefSeq" id="NP_991113.1">
    <property type="nucleotide sequence ID" value="NM_205550.2"/>
</dbReference>
<dbReference type="RefSeq" id="XP_005158016.1">
    <property type="nucleotide sequence ID" value="XM_005157959.5"/>
</dbReference>
<dbReference type="RefSeq" id="XP_021322298.1">
    <property type="nucleotide sequence ID" value="XM_021466623.2"/>
</dbReference>
<dbReference type="SMR" id="Q6P0J3"/>
<dbReference type="FunCoup" id="Q6P0J3">
    <property type="interactions" value="222"/>
</dbReference>
<dbReference type="STRING" id="7955.ENSDARP00000073657"/>
<dbReference type="PaxDb" id="7955-ENSDARP00000073657"/>
<dbReference type="Ensembl" id="ENSDART00000112894">
    <property type="protein sequence ID" value="ENSDARP00000101509"/>
    <property type="gene ID" value="ENSDARG00000056666"/>
</dbReference>
<dbReference type="Ensembl" id="ENSDART00000190590">
    <property type="protein sequence ID" value="ENSDARP00000156612"/>
    <property type="gene ID" value="ENSDARG00000056666"/>
</dbReference>
<dbReference type="GeneID" id="324931"/>
<dbReference type="KEGG" id="dre:324931"/>
<dbReference type="AGR" id="ZFIN:ZDB-GENE-030131-3654"/>
<dbReference type="CTD" id="324931"/>
<dbReference type="ZFIN" id="ZDB-GENE-030131-3654">
    <property type="gene designation" value="sp8b"/>
</dbReference>
<dbReference type="eggNOG" id="KOG1721">
    <property type="taxonomic scope" value="Eukaryota"/>
</dbReference>
<dbReference type="InParanoid" id="Q6P0J3"/>
<dbReference type="OMA" id="GNEYSVF"/>
<dbReference type="OrthoDB" id="6365676at2759"/>
<dbReference type="PhylomeDB" id="Q6P0J3"/>
<dbReference type="PRO" id="PR:Q6P0J3"/>
<dbReference type="Proteomes" id="UP000000437">
    <property type="component" value="Chromosome 16"/>
</dbReference>
<dbReference type="Bgee" id="ENSDARG00000056666">
    <property type="expression patterns" value="Expressed in neural plate and 28 other cell types or tissues"/>
</dbReference>
<dbReference type="ExpressionAtlas" id="Q6P0J3">
    <property type="expression patterns" value="baseline"/>
</dbReference>
<dbReference type="GO" id="GO:0005634">
    <property type="term" value="C:nucleus"/>
    <property type="evidence" value="ECO:0007669"/>
    <property type="project" value="UniProtKB-SubCell"/>
</dbReference>
<dbReference type="GO" id="GO:0000981">
    <property type="term" value="F:DNA-binding transcription factor activity, RNA polymerase II-specific"/>
    <property type="evidence" value="ECO:0000318"/>
    <property type="project" value="GO_Central"/>
</dbReference>
<dbReference type="GO" id="GO:0003690">
    <property type="term" value="F:double-stranded DNA binding"/>
    <property type="evidence" value="ECO:0000314"/>
    <property type="project" value="ZFIN"/>
</dbReference>
<dbReference type="GO" id="GO:0000978">
    <property type="term" value="F:RNA polymerase II cis-regulatory region sequence-specific DNA binding"/>
    <property type="evidence" value="ECO:0000318"/>
    <property type="project" value="GO_Central"/>
</dbReference>
<dbReference type="GO" id="GO:0008270">
    <property type="term" value="F:zinc ion binding"/>
    <property type="evidence" value="ECO:0007669"/>
    <property type="project" value="UniProtKB-KW"/>
</dbReference>
<dbReference type="GO" id="GO:0030326">
    <property type="term" value="P:embryonic limb morphogenesis"/>
    <property type="evidence" value="ECO:0000315"/>
    <property type="project" value="UniProtKB"/>
</dbReference>
<dbReference type="GO" id="GO:0035118">
    <property type="term" value="P:embryonic pectoral fin morphogenesis"/>
    <property type="evidence" value="ECO:0000315"/>
    <property type="project" value="ZFIN"/>
</dbReference>
<dbReference type="GO" id="GO:0045743">
    <property type="term" value="P:positive regulation of fibroblast growth factor receptor signaling pathway"/>
    <property type="evidence" value="ECO:0000315"/>
    <property type="project" value="ZFIN"/>
</dbReference>
<dbReference type="GO" id="GO:0006357">
    <property type="term" value="P:regulation of transcription by RNA polymerase II"/>
    <property type="evidence" value="ECO:0000318"/>
    <property type="project" value="GO_Central"/>
</dbReference>
<dbReference type="CDD" id="cd22538">
    <property type="entry name" value="SP8_N"/>
    <property type="match status" value="1"/>
</dbReference>
<dbReference type="FunFam" id="3.30.160.60:FF:000077">
    <property type="entry name" value="Sp8 transcription factor"/>
    <property type="match status" value="1"/>
</dbReference>
<dbReference type="FunFam" id="3.30.160.60:FF:000014">
    <property type="entry name" value="Transcription factor Sp3"/>
    <property type="match status" value="1"/>
</dbReference>
<dbReference type="FunFam" id="3.30.160.60:FF:000026">
    <property type="entry name" value="Transcription factor Sp3"/>
    <property type="match status" value="1"/>
</dbReference>
<dbReference type="Gene3D" id="3.30.160.60">
    <property type="entry name" value="Classic Zinc Finger"/>
    <property type="match status" value="3"/>
</dbReference>
<dbReference type="InterPro" id="IPR036236">
    <property type="entry name" value="Znf_C2H2_sf"/>
</dbReference>
<dbReference type="InterPro" id="IPR013087">
    <property type="entry name" value="Znf_C2H2_type"/>
</dbReference>
<dbReference type="PANTHER" id="PTHR23235">
    <property type="entry name" value="KRUEPPEL-LIKE TRANSCRIPTION FACTOR"/>
    <property type="match status" value="1"/>
</dbReference>
<dbReference type="PANTHER" id="PTHR23235:SF25">
    <property type="entry name" value="TRANSCRIPTION FACTOR SP8"/>
    <property type="match status" value="1"/>
</dbReference>
<dbReference type="Pfam" id="PF00096">
    <property type="entry name" value="zf-C2H2"/>
    <property type="match status" value="3"/>
</dbReference>
<dbReference type="SMART" id="SM00355">
    <property type="entry name" value="ZnF_C2H2"/>
    <property type="match status" value="3"/>
</dbReference>
<dbReference type="SUPFAM" id="SSF57667">
    <property type="entry name" value="beta-beta-alpha zinc fingers"/>
    <property type="match status" value="2"/>
</dbReference>
<dbReference type="PROSITE" id="PS00028">
    <property type="entry name" value="ZINC_FINGER_C2H2_1"/>
    <property type="match status" value="3"/>
</dbReference>
<dbReference type="PROSITE" id="PS50157">
    <property type="entry name" value="ZINC_FINGER_C2H2_2"/>
    <property type="match status" value="3"/>
</dbReference>
<organism>
    <name type="scientific">Danio rerio</name>
    <name type="common">Zebrafish</name>
    <name type="synonym">Brachydanio rerio</name>
    <dbReference type="NCBI Taxonomy" id="7955"/>
    <lineage>
        <taxon>Eukaryota</taxon>
        <taxon>Metazoa</taxon>
        <taxon>Chordata</taxon>
        <taxon>Craniata</taxon>
        <taxon>Vertebrata</taxon>
        <taxon>Euteleostomi</taxon>
        <taxon>Actinopterygii</taxon>
        <taxon>Neopterygii</taxon>
        <taxon>Teleostei</taxon>
        <taxon>Ostariophysi</taxon>
        <taxon>Cypriniformes</taxon>
        <taxon>Danionidae</taxon>
        <taxon>Danioninae</taxon>
        <taxon>Danio</taxon>
    </lineage>
</organism>
<gene>
    <name type="primary">sp8b</name>
    <name type="synonym">sp8l</name>
</gene>
<sequence length="437" mass="45699">MLAATCNKIGSPSPSPSSISDNSSSFGKGFHPWKRATASSCSLGSSLSSFTRNGGGLSDSFGTNTSTGSSAFSLTSGTSSNSHFGNDYSVFQTSVSNNSQEPSHQPMFISKVHTSVDSLQSIYPRMSVAHPYESWFKSSHPGIPTGDVGTTGASAWWDVGAGWIDVQNPNGAALQTSLHSGGLQTSLHSPLGGYNSDYSSLSHSAFSTSASPHLLTTGQHLMDGFKPVLSSYPDSSPSPLGGAGGSMLTGGPTASLAGSPRSSARRYSGRATCDCPNCQEAERLGPAGASLRRKGLHSCHIPGCGKVYGKTSHLKAHLRWHTGERPFVCNWLFCGKRFTRSDELQRHLRTHTGEKRFACPVCNKRFMRSDHLSKHVKTHSAGGSSGSGSGASGGKRGSDTDSEHSVPGSPSCHSPDLLQAPESVPTTGMNGRASSLD</sequence>
<protein>
    <recommendedName>
        <fullName>Transcription factor Sp8</fullName>
    </recommendedName>
</protein>
<proteinExistence type="evidence at transcript level"/>
<name>SP8_DANRE</name>
<accession>Q6P0J3</accession>
<accession>Q6ED30</accession>
<evidence type="ECO:0000250" key="1">
    <source>
        <dbReference type="UniProtKB" id="Q8IXZ3"/>
    </source>
</evidence>
<evidence type="ECO:0000255" key="2">
    <source>
        <dbReference type="PROSITE-ProRule" id="PRU00042"/>
    </source>
</evidence>
<evidence type="ECO:0000256" key="3">
    <source>
        <dbReference type="SAM" id="MobiDB-lite"/>
    </source>
</evidence>
<evidence type="ECO:0000269" key="4">
    <source>
    </source>
</evidence>
<evidence type="ECO:0000305" key="5"/>
<keyword id="KW-0238">DNA-binding</keyword>
<keyword id="KW-0479">Metal-binding</keyword>
<keyword id="KW-0539">Nucleus</keyword>
<keyword id="KW-1185">Reference proteome</keyword>
<keyword id="KW-0677">Repeat</keyword>
<keyword id="KW-0804">Transcription</keyword>
<keyword id="KW-0805">Transcription regulation</keyword>
<keyword id="KW-0862">Zinc</keyword>
<keyword id="KW-0863">Zinc-finger</keyword>
<comment type="function">
    <text evidence="4">Transcription factor which plays a key role in limb development. Positively regulates FGF8 expression in the apical ectodermal ridge (AER) and contributes to limb outgrowth in embryos.</text>
</comment>
<comment type="subcellular location">
    <subcellularLocation>
        <location evidence="5">Nucleus</location>
    </subcellularLocation>
</comment>
<comment type="developmental stage">
    <text evidence="4">Detected in the forebrain, prospective midbrain/hindbrain boundary, tail bud, and neural keel and neural tube in the somitogenesis stages. Expressed in the pectoral fin bud, and the signal is restricted to the apical fold.</text>
</comment>
<comment type="domain">
    <text evidence="1">The 9aaTAD motif is a transactivation domain present in a large number of yeast and animal transcription factors.</text>
</comment>
<comment type="similarity">
    <text evidence="5">Belongs to the Sp1 C2H2-type zinc-finger protein family.</text>
</comment>